<dbReference type="STRING" id="8128.ENSONIP00000034844"/>
<dbReference type="InParanoid" id="P81029"/>
<dbReference type="Proteomes" id="UP000005207">
    <property type="component" value="Unplaced"/>
</dbReference>
<dbReference type="GO" id="GO:0005576">
    <property type="term" value="C:extracellular region"/>
    <property type="evidence" value="ECO:0007669"/>
    <property type="project" value="UniProtKB-SubCell"/>
</dbReference>
<dbReference type="GO" id="GO:0005179">
    <property type="term" value="F:hormone activity"/>
    <property type="evidence" value="ECO:0007669"/>
    <property type="project" value="UniProtKB-KW"/>
</dbReference>
<dbReference type="InterPro" id="IPR018142">
    <property type="entry name" value="Somatostatin/Cortistatin_C"/>
</dbReference>
<dbReference type="Pfam" id="PF03002">
    <property type="entry name" value="Somatostatin"/>
    <property type="match status" value="1"/>
</dbReference>
<protein>
    <recommendedName>
        <fullName>Somatostatin-2</fullName>
    </recommendedName>
    <alternativeName>
        <fullName>Somatostatin II</fullName>
    </alternativeName>
    <component>
        <recommendedName>
            <fullName>[Tyr21,Gly24]-somatostatin-28</fullName>
        </recommendedName>
    </component>
    <component>
        <recommendedName>
            <fullName>[Tyr7,Gly10]-somatostatin-14</fullName>
        </recommendedName>
    </component>
</protein>
<gene>
    <name type="primary">sst2</name>
</gene>
<organism>
    <name type="scientific">Oreochromis niloticus</name>
    <name type="common">Nile tilapia</name>
    <name type="synonym">Tilapia nilotica</name>
    <dbReference type="NCBI Taxonomy" id="8128"/>
    <lineage>
        <taxon>Eukaryota</taxon>
        <taxon>Metazoa</taxon>
        <taxon>Chordata</taxon>
        <taxon>Craniata</taxon>
        <taxon>Vertebrata</taxon>
        <taxon>Euteleostomi</taxon>
        <taxon>Actinopterygii</taxon>
        <taxon>Neopterygii</taxon>
        <taxon>Teleostei</taxon>
        <taxon>Neoteleostei</taxon>
        <taxon>Acanthomorphata</taxon>
        <taxon>Ovalentaria</taxon>
        <taxon>Cichlomorphae</taxon>
        <taxon>Cichliformes</taxon>
        <taxon>Cichlidae</taxon>
        <taxon>African cichlids</taxon>
        <taxon>Pseudocrenilabrinae</taxon>
        <taxon>Oreochromini</taxon>
        <taxon>Oreochromis</taxon>
    </lineage>
</organism>
<evidence type="ECO:0000305" key="1"/>
<accession>P81029</accession>
<name>SMS2_ORENI</name>
<keyword id="KW-0165">Cleavage on pair of basic residues</keyword>
<keyword id="KW-0903">Direct protein sequencing</keyword>
<keyword id="KW-1015">Disulfide bond</keyword>
<keyword id="KW-0372">Hormone</keyword>
<keyword id="KW-1185">Reference proteome</keyword>
<keyword id="KW-0964">Secreted</keyword>
<proteinExistence type="evidence at protein level"/>
<comment type="function">
    <text>Somatostatin inhibits the release of somatotropin.</text>
</comment>
<comment type="subcellular location">
    <subcellularLocation>
        <location>Secreted</location>
    </subcellularLocation>
</comment>
<comment type="similarity">
    <text evidence="1">Belongs to the somatostatin family.</text>
</comment>
<feature type="peptide" id="PRO_0000033142" description="[Tyr21,Gly24]-somatostatin-28">
    <location>
        <begin position="1"/>
        <end position="28"/>
    </location>
</feature>
<feature type="peptide" id="PRO_0000033143" description="[Tyr7,Gly10]-somatostatin-14">
    <location>
        <begin position="15"/>
        <end position="28"/>
    </location>
</feature>
<feature type="disulfide bond">
    <location>
        <begin position="17"/>
        <end position="28"/>
    </location>
</feature>
<feature type="non-terminal residue">
    <location>
        <position position="1"/>
    </location>
</feature>
<sequence>SADQPNSIPPRERKAGCKNFYWKGLTSC</sequence>
<reference key="1">
    <citation type="journal article" date="1995" name="Comp. Biochem. Physiol.">
        <title>Characterization of the pancreatic hormones from the Brockmann body of the tilapia: implications for islet xenograft studies.</title>
        <authorList>
            <person name="Nguyen T.M."/>
            <person name="Wright J.R. Jr."/>
            <person name="Nielsen P.F."/>
            <person name="Conlon J.M."/>
        </authorList>
    </citation>
    <scope>PROTEIN SEQUENCE</scope>
</reference>